<organism>
    <name type="scientific">Mycobacterium bovis (strain ATCC BAA-935 / AF2122/97)</name>
    <dbReference type="NCBI Taxonomy" id="233413"/>
    <lineage>
        <taxon>Bacteria</taxon>
        <taxon>Bacillati</taxon>
        <taxon>Actinomycetota</taxon>
        <taxon>Actinomycetes</taxon>
        <taxon>Mycobacteriales</taxon>
        <taxon>Mycobacteriaceae</taxon>
        <taxon>Mycobacterium</taxon>
        <taxon>Mycobacterium tuberculosis complex</taxon>
    </lineage>
</organism>
<evidence type="ECO:0000255" key="1">
    <source>
        <dbReference type="HAMAP-Rule" id="MF_00265"/>
    </source>
</evidence>
<keyword id="KW-0378">Hydrolase</keyword>
<keyword id="KW-0460">Magnesium</keyword>
<keyword id="KW-0479">Metal-binding</keyword>
<keyword id="KW-0540">Nuclease</keyword>
<keyword id="KW-1185">Reference proteome</keyword>
<keyword id="KW-1277">Toxin-antitoxin system</keyword>
<reference key="1">
    <citation type="journal article" date="2003" name="Proc. Natl. Acad. Sci. U.S.A.">
        <title>The complete genome sequence of Mycobacterium bovis.</title>
        <authorList>
            <person name="Garnier T."/>
            <person name="Eiglmeier K."/>
            <person name="Camus J.-C."/>
            <person name="Medina N."/>
            <person name="Mansoor H."/>
            <person name="Pryor M."/>
            <person name="Duthoy S."/>
            <person name="Grondin S."/>
            <person name="Lacroix C."/>
            <person name="Monsempe C."/>
            <person name="Simon S."/>
            <person name="Harris B."/>
            <person name="Atkin R."/>
            <person name="Doggett J."/>
            <person name="Mayes R."/>
            <person name="Keating L."/>
            <person name="Wheeler P.R."/>
            <person name="Parkhill J."/>
            <person name="Barrell B.G."/>
            <person name="Cole S.T."/>
            <person name="Gordon S.V."/>
            <person name="Hewinson R.G."/>
        </authorList>
    </citation>
    <scope>NUCLEOTIDE SEQUENCE [LARGE SCALE GENOMIC DNA]</scope>
    <source>
        <strain>ATCC BAA-935 / AF2122/97</strain>
    </source>
</reference>
<reference key="2">
    <citation type="journal article" date="2017" name="Genome Announc.">
        <title>Updated reference genome sequence and annotation of Mycobacterium bovis AF2122/97.</title>
        <authorList>
            <person name="Malone K.M."/>
            <person name="Farrell D."/>
            <person name="Stuber T.P."/>
            <person name="Schubert O.T."/>
            <person name="Aebersold R."/>
            <person name="Robbe-Austerman S."/>
            <person name="Gordon S.V."/>
        </authorList>
    </citation>
    <scope>NUCLEOTIDE SEQUENCE [LARGE SCALE GENOMIC DNA]</scope>
    <scope>GENOME REANNOTATION</scope>
    <source>
        <strain>ATCC BAA-935 / AF2122/97</strain>
    </source>
</reference>
<sequence length="131" mass="14726">MILVDSNIPMYLVGASHPHKLDAQRLLESALSGGERLVTDAEVLQEICHRYVAIKRREAIQPAFDAIIGVVDEVLPIERTDVEHARDALLRYQTLSARDALHIAVMAHHDITRLMSFDRGFDSYPGIKRLA</sequence>
<feature type="chain" id="PRO_0000103912" description="VapC ribonuclease Mb1869c">
    <location>
        <begin position="1"/>
        <end position="131"/>
    </location>
</feature>
<feature type="domain" description="PINc" evidence="1">
    <location>
        <begin position="2"/>
        <end position="128"/>
    </location>
</feature>
<feature type="binding site" evidence="1">
    <location>
        <position position="5"/>
    </location>
    <ligand>
        <name>Mg(2+)</name>
        <dbReference type="ChEBI" id="CHEBI:18420"/>
    </ligand>
</feature>
<feature type="binding site" evidence="1">
    <location>
        <position position="99"/>
    </location>
    <ligand>
        <name>Mg(2+)</name>
        <dbReference type="ChEBI" id="CHEBI:18420"/>
    </ligand>
</feature>
<comment type="function">
    <text evidence="1">Toxic component of a type II toxin-antitoxin (TA) system. An RNase.</text>
</comment>
<comment type="cofactor">
    <cofactor evidence="1">
        <name>Mg(2+)</name>
        <dbReference type="ChEBI" id="CHEBI:18420"/>
    </cofactor>
</comment>
<comment type="similarity">
    <text evidence="1">Belongs to the PINc/VapC protein family.</text>
</comment>
<dbReference type="EC" id="3.1.-.-" evidence="1"/>
<dbReference type="EMBL" id="LT708304">
    <property type="protein sequence ID" value="SIU00473.1"/>
    <property type="molecule type" value="Genomic_DNA"/>
</dbReference>
<dbReference type="RefSeq" id="NP_855521.1">
    <property type="nucleotide sequence ID" value="NC_002945.3"/>
</dbReference>
<dbReference type="RefSeq" id="WP_003409273.1">
    <property type="nucleotide sequence ID" value="NC_002945.4"/>
</dbReference>
<dbReference type="SMR" id="P64902"/>
<dbReference type="KEGG" id="mbo:BQ2027_MB1869C"/>
<dbReference type="PATRIC" id="fig|233413.5.peg.2049"/>
<dbReference type="Proteomes" id="UP000001419">
    <property type="component" value="Chromosome"/>
</dbReference>
<dbReference type="GO" id="GO:0000287">
    <property type="term" value="F:magnesium ion binding"/>
    <property type="evidence" value="ECO:0007669"/>
    <property type="project" value="UniProtKB-UniRule"/>
</dbReference>
<dbReference type="GO" id="GO:0004540">
    <property type="term" value="F:RNA nuclease activity"/>
    <property type="evidence" value="ECO:0007669"/>
    <property type="project" value="InterPro"/>
</dbReference>
<dbReference type="CDD" id="cd09854">
    <property type="entry name" value="PIN_VapC-like"/>
    <property type="match status" value="1"/>
</dbReference>
<dbReference type="Gene3D" id="3.40.50.1010">
    <property type="entry name" value="5'-nuclease"/>
    <property type="match status" value="1"/>
</dbReference>
<dbReference type="HAMAP" id="MF_00265">
    <property type="entry name" value="VapC_Nob1"/>
    <property type="match status" value="1"/>
</dbReference>
<dbReference type="InterPro" id="IPR029060">
    <property type="entry name" value="PIN-like_dom_sf"/>
</dbReference>
<dbReference type="InterPro" id="IPR002716">
    <property type="entry name" value="PIN_dom"/>
</dbReference>
<dbReference type="InterPro" id="IPR052106">
    <property type="entry name" value="PINc/VapC_TA"/>
</dbReference>
<dbReference type="InterPro" id="IPR022907">
    <property type="entry name" value="VapC_family"/>
</dbReference>
<dbReference type="PANTHER" id="PTHR38826">
    <property type="entry name" value="RIBONUCLEASE VAPC13"/>
    <property type="match status" value="1"/>
</dbReference>
<dbReference type="PANTHER" id="PTHR38826:SF5">
    <property type="entry name" value="RIBONUCLEASE VAPC13"/>
    <property type="match status" value="1"/>
</dbReference>
<dbReference type="Pfam" id="PF01850">
    <property type="entry name" value="PIN"/>
    <property type="match status" value="1"/>
</dbReference>
<dbReference type="SUPFAM" id="SSF88723">
    <property type="entry name" value="PIN domain-like"/>
    <property type="match status" value="1"/>
</dbReference>
<gene>
    <name type="ordered locus">BQ2027_MB1869C</name>
</gene>
<accession>P64902</accession>
<accession>A0A1R3XZF7</accession>
<accession>P95168</accession>
<accession>Q50595</accession>
<accession>X2BJ75</accession>
<name>VAPC5_MYCBO</name>
<proteinExistence type="inferred from homology"/>
<protein>
    <recommendedName>
        <fullName>VapC ribonuclease Mb1869c</fullName>
        <shortName>RNase Mb1869c</shortName>
        <ecNumber evidence="1">3.1.-.-</ecNumber>
    </recommendedName>
    <alternativeName>
        <fullName>Toxin Mb1869c</fullName>
    </alternativeName>
</protein>